<organism>
    <name type="scientific">Antilocapra americana</name>
    <name type="common">Pronghorn</name>
    <dbReference type="NCBI Taxonomy" id="9891"/>
    <lineage>
        <taxon>Eukaryota</taxon>
        <taxon>Metazoa</taxon>
        <taxon>Chordata</taxon>
        <taxon>Craniata</taxon>
        <taxon>Vertebrata</taxon>
        <taxon>Euteleostomi</taxon>
        <taxon>Mammalia</taxon>
        <taxon>Eutheria</taxon>
        <taxon>Laurasiatheria</taxon>
        <taxon>Artiodactyla</taxon>
        <taxon>Ruminantia</taxon>
        <taxon>Pecora</taxon>
        <taxon>Antilocapridae</taxon>
        <taxon>Antilocapra</taxon>
    </lineage>
</organism>
<sequence>KETAAAKFERQHIDSNPSSVSSSNYCNQMMKSRNLTQGRCKPVNTFVHESLADVQAVCSQKNVACKNGQTNCYQSYSTMSITDCRETGSSKYPNCAYKTTQAKKHIIVACEGNPYVPVHYDASV</sequence>
<name>RNAS1_ANTAM</name>
<gene>
    <name type="primary">RNASE1</name>
    <name type="synonym">RNS1</name>
</gene>
<dbReference type="EC" id="4.6.1.18"/>
<dbReference type="PIR" id="A00813">
    <property type="entry name" value="NRPRH"/>
</dbReference>
<dbReference type="SMR" id="P00668"/>
<dbReference type="GlyCosmos" id="P00668">
    <property type="glycosylation" value="1 site, No reported glycans"/>
</dbReference>
<dbReference type="iPTMnet" id="P00668"/>
<dbReference type="GO" id="GO:0005576">
    <property type="term" value="C:extracellular region"/>
    <property type="evidence" value="ECO:0007669"/>
    <property type="project" value="UniProtKB-SubCell"/>
</dbReference>
<dbReference type="GO" id="GO:0016829">
    <property type="term" value="F:lyase activity"/>
    <property type="evidence" value="ECO:0007669"/>
    <property type="project" value="UniProtKB-KW"/>
</dbReference>
<dbReference type="GO" id="GO:0003676">
    <property type="term" value="F:nucleic acid binding"/>
    <property type="evidence" value="ECO:0007669"/>
    <property type="project" value="InterPro"/>
</dbReference>
<dbReference type="GO" id="GO:0004522">
    <property type="term" value="F:ribonuclease A activity"/>
    <property type="evidence" value="ECO:0007669"/>
    <property type="project" value="UniProtKB-EC"/>
</dbReference>
<dbReference type="GO" id="GO:0050830">
    <property type="term" value="P:defense response to Gram-positive bacterium"/>
    <property type="evidence" value="ECO:0007669"/>
    <property type="project" value="TreeGrafter"/>
</dbReference>
<dbReference type="CDD" id="cd06265">
    <property type="entry name" value="RNase_A_canonical"/>
    <property type="match status" value="1"/>
</dbReference>
<dbReference type="FunFam" id="3.10.130.10:FF:000001">
    <property type="entry name" value="Ribonuclease pancreatic"/>
    <property type="match status" value="1"/>
</dbReference>
<dbReference type="Gene3D" id="3.10.130.10">
    <property type="entry name" value="Ribonuclease A-like domain"/>
    <property type="match status" value="1"/>
</dbReference>
<dbReference type="InterPro" id="IPR001427">
    <property type="entry name" value="RNaseA"/>
</dbReference>
<dbReference type="InterPro" id="IPR036816">
    <property type="entry name" value="RNaseA-like_dom_sf"/>
</dbReference>
<dbReference type="InterPro" id="IPR023411">
    <property type="entry name" value="RNaseA_AS"/>
</dbReference>
<dbReference type="InterPro" id="IPR023412">
    <property type="entry name" value="RNaseA_domain"/>
</dbReference>
<dbReference type="PANTHER" id="PTHR11437">
    <property type="entry name" value="RIBONUCLEASE"/>
    <property type="match status" value="1"/>
</dbReference>
<dbReference type="PANTHER" id="PTHR11437:SF24">
    <property type="entry name" value="RIBONUCLEASE PANCREATIC"/>
    <property type="match status" value="1"/>
</dbReference>
<dbReference type="Pfam" id="PF00074">
    <property type="entry name" value="RnaseA"/>
    <property type="match status" value="1"/>
</dbReference>
<dbReference type="PRINTS" id="PR00794">
    <property type="entry name" value="RIBONUCLEASE"/>
</dbReference>
<dbReference type="SMART" id="SM00092">
    <property type="entry name" value="RNAse_Pc"/>
    <property type="match status" value="1"/>
</dbReference>
<dbReference type="SUPFAM" id="SSF54076">
    <property type="entry name" value="RNase A-like"/>
    <property type="match status" value="1"/>
</dbReference>
<dbReference type="PROSITE" id="PS00127">
    <property type="entry name" value="RNASE_PANCREATIC"/>
    <property type="match status" value="1"/>
</dbReference>
<evidence type="ECO:0000250" key="1"/>
<evidence type="ECO:0000256" key="2">
    <source>
        <dbReference type="SAM" id="MobiDB-lite"/>
    </source>
</evidence>
<evidence type="ECO:0000269" key="3">
    <source>
    </source>
</evidence>
<evidence type="ECO:0000305" key="4"/>
<keyword id="KW-0903">Direct protein sequencing</keyword>
<keyword id="KW-1015">Disulfide bond</keyword>
<keyword id="KW-0255">Endonuclease</keyword>
<keyword id="KW-0325">Glycoprotein</keyword>
<keyword id="KW-0378">Hydrolase</keyword>
<keyword id="KW-0456">Lyase</keyword>
<keyword id="KW-0540">Nuclease</keyword>
<keyword id="KW-0964">Secreted</keyword>
<comment type="function">
    <text evidence="1">Endonuclease that catalyzes the cleavage of RNA on the 3' side of pyrimidine nucleotides. Acts on single-stranded and double-stranded RNA (By similarity).</text>
</comment>
<comment type="catalytic activity">
    <reaction>
        <text>an [RNA] containing cytidine + H2O = an [RNA]-3'-cytidine-3'-phosphate + a 5'-hydroxy-ribonucleotide-3'-[RNA].</text>
        <dbReference type="EC" id="4.6.1.18"/>
    </reaction>
</comment>
<comment type="catalytic activity">
    <reaction>
        <text>an [RNA] containing uridine + H2O = an [RNA]-3'-uridine-3'-phosphate + a 5'-hydroxy-ribonucleotide-3'-[RNA].</text>
        <dbReference type="EC" id="4.6.1.18"/>
    </reaction>
</comment>
<comment type="subunit">
    <text evidence="1">Monomer. Interacts with and forms tight 1:1 complexes with RNH1. Dimerization of two such complexes may occur. Interaction with RNH1 inhibits this protein (By similarity).</text>
</comment>
<comment type="subcellular location">
    <subcellularLocation>
        <location>Secreted</location>
    </subcellularLocation>
</comment>
<comment type="tissue specificity">
    <text>Pancreas.</text>
</comment>
<comment type="similarity">
    <text evidence="4">Belongs to the pancreatic ribonuclease family.</text>
</comment>
<proteinExistence type="evidence at protein level"/>
<protein>
    <recommendedName>
        <fullName>Ribonuclease pancreatic</fullName>
        <ecNumber>4.6.1.18</ecNumber>
    </recommendedName>
    <alternativeName>
        <fullName>RNase 1</fullName>
    </alternativeName>
    <alternativeName>
        <fullName>RNase A</fullName>
    </alternativeName>
</protein>
<accession>P00668</accession>
<reference key="1">
    <citation type="journal article" date="1979" name="J. Mol. Evol.">
        <title>Primary structure of pronghorn pancreatic ribonuclease: close relationship between giraffe and pronghorn.</title>
        <authorList>
            <person name="Beintema J.J."/>
            <person name="Gaastra W."/>
            <person name="Munniksma J."/>
        </authorList>
    </citation>
    <scope>PROTEIN SEQUENCE</scope>
    <scope>GLYCOSYLATION AT ASN-34</scope>
    <source>
        <tissue>Pancreas</tissue>
    </source>
</reference>
<feature type="chain" id="PRO_0000057178" description="Ribonuclease pancreatic">
    <location>
        <begin position="1"/>
        <end position="124"/>
    </location>
</feature>
<feature type="region of interest" description="Disordered" evidence="2">
    <location>
        <begin position="1"/>
        <end position="24"/>
    </location>
</feature>
<feature type="compositionally biased region" description="Basic and acidic residues" evidence="2">
    <location>
        <begin position="1"/>
        <end position="13"/>
    </location>
</feature>
<feature type="compositionally biased region" description="Low complexity" evidence="2">
    <location>
        <begin position="15"/>
        <end position="24"/>
    </location>
</feature>
<feature type="active site" description="Proton acceptor" evidence="1">
    <location>
        <position position="12"/>
    </location>
</feature>
<feature type="active site" description="Proton donor" evidence="1">
    <location>
        <position position="119"/>
    </location>
</feature>
<feature type="binding site" evidence="1">
    <location>
        <position position="7"/>
    </location>
    <ligand>
        <name>substrate</name>
    </ligand>
</feature>
<feature type="binding site" evidence="1">
    <location>
        <position position="10"/>
    </location>
    <ligand>
        <name>substrate</name>
    </ligand>
</feature>
<feature type="binding site" evidence="1">
    <location>
        <begin position="41"/>
        <end position="45"/>
    </location>
    <ligand>
        <name>substrate</name>
    </ligand>
</feature>
<feature type="binding site" evidence="1">
    <location>
        <position position="66"/>
    </location>
    <ligand>
        <name>substrate</name>
    </ligand>
</feature>
<feature type="binding site" evidence="1">
    <location>
        <position position="85"/>
    </location>
    <ligand>
        <name>substrate</name>
    </ligand>
</feature>
<feature type="glycosylation site" description="N-linked (GlcNAc...) asparagine; partial" evidence="3">
    <location>
        <position position="34"/>
    </location>
</feature>
<feature type="disulfide bond" evidence="1">
    <location>
        <begin position="26"/>
        <end position="84"/>
    </location>
</feature>
<feature type="disulfide bond" evidence="1">
    <location>
        <begin position="40"/>
        <end position="95"/>
    </location>
</feature>
<feature type="disulfide bond" evidence="1">
    <location>
        <begin position="58"/>
        <end position="110"/>
    </location>
</feature>
<feature type="disulfide bond" evidence="1">
    <location>
        <begin position="65"/>
        <end position="72"/>
    </location>
</feature>